<reference key="1">
    <citation type="journal article" date="2008" name="Genome Biol.">
        <title>A genomic analysis of the archaeal system Ignicoccus hospitalis-Nanoarchaeum equitans.</title>
        <authorList>
            <person name="Podar M."/>
            <person name="Anderson I."/>
            <person name="Makarova K.S."/>
            <person name="Elkins J.G."/>
            <person name="Ivanova N."/>
            <person name="Wall M.A."/>
            <person name="Lykidis A."/>
            <person name="Mavromatis K."/>
            <person name="Sun H."/>
            <person name="Hudson M.E."/>
            <person name="Chen W."/>
            <person name="Deciu C."/>
            <person name="Hutchison D."/>
            <person name="Eads J.R."/>
            <person name="Anderson A."/>
            <person name="Fernandes F."/>
            <person name="Szeto E."/>
            <person name="Lapidus A."/>
            <person name="Kyrpides N.C."/>
            <person name="Saier M.H. Jr."/>
            <person name="Richardson P.M."/>
            <person name="Rachel R."/>
            <person name="Huber H."/>
            <person name="Eisen J.A."/>
            <person name="Koonin E.V."/>
            <person name="Keller M."/>
            <person name="Stetter K.O."/>
        </authorList>
    </citation>
    <scope>NUCLEOTIDE SEQUENCE [LARGE SCALE GENOMIC DNA]</scope>
    <source>
        <strain>KIN4/I / DSM 18386 / JCM 14125</strain>
    </source>
</reference>
<accession>A8A8W1</accession>
<organism>
    <name type="scientific">Ignicoccus hospitalis (strain KIN4/I / DSM 18386 / JCM 14125)</name>
    <dbReference type="NCBI Taxonomy" id="453591"/>
    <lineage>
        <taxon>Archaea</taxon>
        <taxon>Thermoproteota</taxon>
        <taxon>Thermoprotei</taxon>
        <taxon>Desulfurococcales</taxon>
        <taxon>Desulfurococcaceae</taxon>
        <taxon>Ignicoccus</taxon>
    </lineage>
</organism>
<evidence type="ECO:0000255" key="1">
    <source>
        <dbReference type="HAMAP-Rule" id="MF_01405"/>
    </source>
</evidence>
<proteinExistence type="inferred from homology"/>
<name>IXTPA_IGNH4</name>
<dbReference type="EC" id="3.6.1.66" evidence="1"/>
<dbReference type="EMBL" id="CP000816">
    <property type="protein sequence ID" value="ABU81363.1"/>
    <property type="molecule type" value="Genomic_DNA"/>
</dbReference>
<dbReference type="RefSeq" id="WP_011998215.1">
    <property type="nucleotide sequence ID" value="NC_009776.1"/>
</dbReference>
<dbReference type="SMR" id="A8A8W1"/>
<dbReference type="STRING" id="453591.Igni_0179"/>
<dbReference type="GeneID" id="5562338"/>
<dbReference type="KEGG" id="iho:Igni_0179"/>
<dbReference type="eggNOG" id="arCOG04184">
    <property type="taxonomic scope" value="Archaea"/>
</dbReference>
<dbReference type="HOGENOM" id="CLU_082080_1_0_2"/>
<dbReference type="OrthoDB" id="372108at2157"/>
<dbReference type="PhylomeDB" id="A8A8W1"/>
<dbReference type="Proteomes" id="UP000000262">
    <property type="component" value="Chromosome"/>
</dbReference>
<dbReference type="GO" id="GO:0005737">
    <property type="term" value="C:cytoplasm"/>
    <property type="evidence" value="ECO:0007669"/>
    <property type="project" value="TreeGrafter"/>
</dbReference>
<dbReference type="GO" id="GO:0035870">
    <property type="term" value="F:dITP diphosphatase activity"/>
    <property type="evidence" value="ECO:0007669"/>
    <property type="project" value="RHEA"/>
</dbReference>
<dbReference type="GO" id="GO:0036220">
    <property type="term" value="F:ITP diphosphatase activity"/>
    <property type="evidence" value="ECO:0007669"/>
    <property type="project" value="UniProtKB-EC"/>
</dbReference>
<dbReference type="GO" id="GO:0046872">
    <property type="term" value="F:metal ion binding"/>
    <property type="evidence" value="ECO:0007669"/>
    <property type="project" value="UniProtKB-KW"/>
</dbReference>
<dbReference type="GO" id="GO:0000166">
    <property type="term" value="F:nucleotide binding"/>
    <property type="evidence" value="ECO:0007669"/>
    <property type="project" value="UniProtKB-KW"/>
</dbReference>
<dbReference type="GO" id="GO:0017111">
    <property type="term" value="F:ribonucleoside triphosphate phosphatase activity"/>
    <property type="evidence" value="ECO:0007669"/>
    <property type="project" value="InterPro"/>
</dbReference>
<dbReference type="GO" id="GO:0036222">
    <property type="term" value="F:XTP diphosphatase activity"/>
    <property type="evidence" value="ECO:0007669"/>
    <property type="project" value="RHEA"/>
</dbReference>
<dbReference type="GO" id="GO:0009117">
    <property type="term" value="P:nucleotide metabolic process"/>
    <property type="evidence" value="ECO:0007669"/>
    <property type="project" value="UniProtKB-KW"/>
</dbReference>
<dbReference type="GO" id="GO:0009146">
    <property type="term" value="P:purine nucleoside triphosphate catabolic process"/>
    <property type="evidence" value="ECO:0007669"/>
    <property type="project" value="UniProtKB-UniRule"/>
</dbReference>
<dbReference type="CDD" id="cd00515">
    <property type="entry name" value="HAM1"/>
    <property type="match status" value="1"/>
</dbReference>
<dbReference type="FunFam" id="3.90.950.10:FF:000001">
    <property type="entry name" value="dITP/XTP pyrophosphatase"/>
    <property type="match status" value="1"/>
</dbReference>
<dbReference type="Gene3D" id="3.90.950.10">
    <property type="match status" value="1"/>
</dbReference>
<dbReference type="HAMAP" id="MF_01405">
    <property type="entry name" value="Non_canon_purine_NTPase"/>
    <property type="match status" value="1"/>
</dbReference>
<dbReference type="InterPro" id="IPR020922">
    <property type="entry name" value="dITP/XTP_pyrophosphatase"/>
</dbReference>
<dbReference type="InterPro" id="IPR029001">
    <property type="entry name" value="ITPase-like_fam"/>
</dbReference>
<dbReference type="InterPro" id="IPR002637">
    <property type="entry name" value="RdgB/HAM1"/>
</dbReference>
<dbReference type="NCBIfam" id="NF011396">
    <property type="entry name" value="PRK14821.1"/>
    <property type="match status" value="1"/>
</dbReference>
<dbReference type="NCBIfam" id="TIGR00042">
    <property type="entry name" value="RdgB/HAM1 family non-canonical purine NTP pyrophosphatase"/>
    <property type="match status" value="1"/>
</dbReference>
<dbReference type="PANTHER" id="PTHR11067:SF9">
    <property type="entry name" value="INOSINE TRIPHOSPHATE PYROPHOSPHATASE"/>
    <property type="match status" value="1"/>
</dbReference>
<dbReference type="PANTHER" id="PTHR11067">
    <property type="entry name" value="INOSINE TRIPHOSPHATE PYROPHOSPHATASE/HAM1 PROTEIN"/>
    <property type="match status" value="1"/>
</dbReference>
<dbReference type="Pfam" id="PF01725">
    <property type="entry name" value="Ham1p_like"/>
    <property type="match status" value="1"/>
</dbReference>
<dbReference type="SUPFAM" id="SSF52972">
    <property type="entry name" value="ITPase-like"/>
    <property type="match status" value="1"/>
</dbReference>
<comment type="function">
    <text evidence="1">Pyrophosphatase that catalyzes the hydrolysis of nucleoside triphosphates to their monophosphate derivatives, with a high preference for the non-canonical purine nucleotides XTP (xanthosine triphosphate), dITP (deoxyinosine triphosphate) and ITP. Seems to function as a house-cleaning enzyme that removes non-canonical purine nucleotides from the nucleotide pool, thus preventing their incorporation into DNA/RNA and avoiding chromosomal lesions.</text>
</comment>
<comment type="catalytic activity">
    <reaction evidence="1">
        <text>XTP + H2O = XMP + diphosphate + H(+)</text>
        <dbReference type="Rhea" id="RHEA:28610"/>
        <dbReference type="ChEBI" id="CHEBI:15377"/>
        <dbReference type="ChEBI" id="CHEBI:15378"/>
        <dbReference type="ChEBI" id="CHEBI:33019"/>
        <dbReference type="ChEBI" id="CHEBI:57464"/>
        <dbReference type="ChEBI" id="CHEBI:61314"/>
        <dbReference type="EC" id="3.6.1.66"/>
    </reaction>
</comment>
<comment type="catalytic activity">
    <reaction evidence="1">
        <text>dITP + H2O = dIMP + diphosphate + H(+)</text>
        <dbReference type="Rhea" id="RHEA:28342"/>
        <dbReference type="ChEBI" id="CHEBI:15377"/>
        <dbReference type="ChEBI" id="CHEBI:15378"/>
        <dbReference type="ChEBI" id="CHEBI:33019"/>
        <dbReference type="ChEBI" id="CHEBI:61194"/>
        <dbReference type="ChEBI" id="CHEBI:61382"/>
        <dbReference type="EC" id="3.6.1.66"/>
    </reaction>
</comment>
<comment type="catalytic activity">
    <reaction evidence="1">
        <text>ITP + H2O = IMP + diphosphate + H(+)</text>
        <dbReference type="Rhea" id="RHEA:29399"/>
        <dbReference type="ChEBI" id="CHEBI:15377"/>
        <dbReference type="ChEBI" id="CHEBI:15378"/>
        <dbReference type="ChEBI" id="CHEBI:33019"/>
        <dbReference type="ChEBI" id="CHEBI:58053"/>
        <dbReference type="ChEBI" id="CHEBI:61402"/>
        <dbReference type="EC" id="3.6.1.66"/>
    </reaction>
</comment>
<comment type="cofactor">
    <cofactor evidence="1">
        <name>Mg(2+)</name>
        <dbReference type="ChEBI" id="CHEBI:18420"/>
    </cofactor>
    <text evidence="1">Binds 1 Mg(2+) ion per subunit.</text>
</comment>
<comment type="subunit">
    <text evidence="1">Homodimer.</text>
</comment>
<comment type="similarity">
    <text evidence="1">Belongs to the HAM1 NTPase family.</text>
</comment>
<protein>
    <recommendedName>
        <fullName evidence="1">dITP/XTP pyrophosphatase</fullName>
        <ecNumber evidence="1">3.6.1.66</ecNumber>
    </recommendedName>
    <alternativeName>
        <fullName evidence="1">Non-canonical purine NTP pyrophosphatase</fullName>
    </alternativeName>
    <alternativeName>
        <fullName evidence="1">Non-standard purine NTP pyrophosphatase</fullName>
    </alternativeName>
    <alternativeName>
        <fullName evidence="1">Nucleoside-triphosphate diphosphatase</fullName>
    </alternativeName>
    <alternativeName>
        <fullName evidence="1">Nucleoside-triphosphate pyrophosphatase</fullName>
        <shortName evidence="1">NTPase</shortName>
    </alternativeName>
</protein>
<feature type="chain" id="PRO_1000087379" description="dITP/XTP pyrophosphatase">
    <location>
        <begin position="1"/>
        <end position="188"/>
    </location>
</feature>
<feature type="active site" description="Proton acceptor" evidence="1">
    <location>
        <position position="69"/>
    </location>
</feature>
<feature type="binding site" evidence="1">
    <location>
        <begin position="10"/>
        <end position="15"/>
    </location>
    <ligand>
        <name>substrate</name>
    </ligand>
</feature>
<feature type="binding site" evidence="1">
    <location>
        <position position="39"/>
    </location>
    <ligand>
        <name>Mg(2+)</name>
        <dbReference type="ChEBI" id="CHEBI:18420"/>
    </ligand>
</feature>
<feature type="binding site" evidence="1">
    <location>
        <position position="69"/>
    </location>
    <ligand>
        <name>Mg(2+)</name>
        <dbReference type="ChEBI" id="CHEBI:18420"/>
    </ligand>
</feature>
<feature type="binding site" evidence="1">
    <location>
        <position position="70"/>
    </location>
    <ligand>
        <name>substrate</name>
    </ligand>
</feature>
<feature type="binding site" evidence="1">
    <location>
        <begin position="145"/>
        <end position="148"/>
    </location>
    <ligand>
        <name>substrate</name>
    </ligand>
</feature>
<feature type="binding site" evidence="1">
    <location>
        <position position="168"/>
    </location>
    <ligand>
        <name>substrate</name>
    </ligand>
</feature>
<feature type="binding site" evidence="1">
    <location>
        <begin position="173"/>
        <end position="174"/>
    </location>
    <ligand>
        <name>substrate</name>
    </ligand>
</feature>
<keyword id="KW-0378">Hydrolase</keyword>
<keyword id="KW-0460">Magnesium</keyword>
<keyword id="KW-0479">Metal-binding</keyword>
<keyword id="KW-0546">Nucleotide metabolism</keyword>
<keyword id="KW-0547">Nucleotide-binding</keyword>
<keyword id="KW-1185">Reference proteome</keyword>
<sequence length="188" mass="21114">MVSKKVYFLTSNPHKAKEVSDVLSQFSIEVVPLKGEKLEIQADSVEEVARFAAEEAKKRFKERPLLLEDSGLFVDALKGFPGPYSNYVYRTLGLEGLLKLMEGVEDRRARFVCAAALVKEDDKIVIEVGEVEGEIAYEPRGDKGFGFDPIFVPLGYEKTFAELGEEVKKRISHRARAFMKIAKHLSGE</sequence>
<gene>
    <name type="ordered locus">Igni_0179</name>
</gene>